<gene>
    <name evidence="1" type="primary">hrcA</name>
    <name type="ordered locus">Nham_0152</name>
</gene>
<name>HRCA_NITHX</name>
<sequence>MVHHDPIGLIAPNTGLAQLNERSRDIFRQIVESYLATGEPVGSRNISRLITMPLSPASVRNVMSDLEQLGLIYAPHTSAGRLPTEFGLRFFVDALMQVGDLTETERQSIQTQLASVGKAQSVEAALDQALTRLSGLTRAAAVVLTAKSNVRLKHIEFVRLEPEKALVVLVAEDGQVENRVLTLPSGVPASALTEASNFLNARIRGRTLAEARLELETALTQSKAELDQLTQKVIAAGIASWSGGDSDDRQLIVRGHANLLEDLHALEDLERVRLLFDDLETKRGVIDLLGRAERADGVRIFIGSENKLFSLSGSSTIIAPYNDGAGHIVGVLGVIGPTRLNYARVIPMVDYAARIVSQMLGG</sequence>
<reference key="1">
    <citation type="submission" date="2006-03" db="EMBL/GenBank/DDBJ databases">
        <title>Complete sequence of chromosome of Nitrobacter hamburgensis X14.</title>
        <authorList>
            <consortium name="US DOE Joint Genome Institute"/>
            <person name="Copeland A."/>
            <person name="Lucas S."/>
            <person name="Lapidus A."/>
            <person name="Barry K."/>
            <person name="Detter J.C."/>
            <person name="Glavina del Rio T."/>
            <person name="Hammon N."/>
            <person name="Israni S."/>
            <person name="Dalin E."/>
            <person name="Tice H."/>
            <person name="Pitluck S."/>
            <person name="Chain P."/>
            <person name="Malfatti S."/>
            <person name="Shin M."/>
            <person name="Vergez L."/>
            <person name="Schmutz J."/>
            <person name="Larimer F."/>
            <person name="Land M."/>
            <person name="Hauser L."/>
            <person name="Kyrpides N."/>
            <person name="Ivanova N."/>
            <person name="Ward B."/>
            <person name="Arp D."/>
            <person name="Klotz M."/>
            <person name="Stein L."/>
            <person name="O'Mullan G."/>
            <person name="Starkenburg S."/>
            <person name="Sayavedra L."/>
            <person name="Poret-Peterson A.T."/>
            <person name="Gentry M.E."/>
            <person name="Bruce D."/>
            <person name="Richardson P."/>
        </authorList>
    </citation>
    <scope>NUCLEOTIDE SEQUENCE [LARGE SCALE GENOMIC DNA]</scope>
    <source>
        <strain>DSM 10229 / NCIMB 13809 / X14</strain>
    </source>
</reference>
<dbReference type="EMBL" id="CP000319">
    <property type="protein sequence ID" value="ABE61053.1"/>
    <property type="molecule type" value="Genomic_DNA"/>
</dbReference>
<dbReference type="RefSeq" id="WP_011508759.1">
    <property type="nucleotide sequence ID" value="NC_007964.1"/>
</dbReference>
<dbReference type="SMR" id="Q1QRU4"/>
<dbReference type="STRING" id="323097.Nham_0152"/>
<dbReference type="KEGG" id="nha:Nham_0152"/>
<dbReference type="eggNOG" id="COG1420">
    <property type="taxonomic scope" value="Bacteria"/>
</dbReference>
<dbReference type="HOGENOM" id="CLU_050019_0_0_5"/>
<dbReference type="OrthoDB" id="9783139at2"/>
<dbReference type="Proteomes" id="UP000001953">
    <property type="component" value="Chromosome"/>
</dbReference>
<dbReference type="GO" id="GO:0003677">
    <property type="term" value="F:DNA binding"/>
    <property type="evidence" value="ECO:0007669"/>
    <property type="project" value="InterPro"/>
</dbReference>
<dbReference type="GO" id="GO:0045892">
    <property type="term" value="P:negative regulation of DNA-templated transcription"/>
    <property type="evidence" value="ECO:0007669"/>
    <property type="project" value="UniProtKB-UniRule"/>
</dbReference>
<dbReference type="Gene3D" id="3.30.450.40">
    <property type="match status" value="1"/>
</dbReference>
<dbReference type="Gene3D" id="3.30.390.60">
    <property type="entry name" value="Heat-inducible transcription repressor hrca homolog, domain 3"/>
    <property type="match status" value="1"/>
</dbReference>
<dbReference type="Gene3D" id="1.10.10.10">
    <property type="entry name" value="Winged helix-like DNA-binding domain superfamily/Winged helix DNA-binding domain"/>
    <property type="match status" value="1"/>
</dbReference>
<dbReference type="HAMAP" id="MF_00081">
    <property type="entry name" value="HrcA"/>
    <property type="match status" value="1"/>
</dbReference>
<dbReference type="InterPro" id="IPR029016">
    <property type="entry name" value="GAF-like_dom_sf"/>
</dbReference>
<dbReference type="InterPro" id="IPR002571">
    <property type="entry name" value="HrcA"/>
</dbReference>
<dbReference type="InterPro" id="IPR021153">
    <property type="entry name" value="HrcA_C"/>
</dbReference>
<dbReference type="InterPro" id="IPR036388">
    <property type="entry name" value="WH-like_DNA-bd_sf"/>
</dbReference>
<dbReference type="InterPro" id="IPR036390">
    <property type="entry name" value="WH_DNA-bd_sf"/>
</dbReference>
<dbReference type="InterPro" id="IPR023120">
    <property type="entry name" value="WHTH_transcript_rep_HrcA_IDD"/>
</dbReference>
<dbReference type="NCBIfam" id="TIGR00331">
    <property type="entry name" value="hrcA"/>
    <property type="match status" value="1"/>
</dbReference>
<dbReference type="PANTHER" id="PTHR34824">
    <property type="entry name" value="HEAT-INDUCIBLE TRANSCRIPTION REPRESSOR HRCA"/>
    <property type="match status" value="1"/>
</dbReference>
<dbReference type="PANTHER" id="PTHR34824:SF1">
    <property type="entry name" value="HEAT-INDUCIBLE TRANSCRIPTION REPRESSOR HRCA"/>
    <property type="match status" value="1"/>
</dbReference>
<dbReference type="Pfam" id="PF01628">
    <property type="entry name" value="HrcA"/>
    <property type="match status" value="1"/>
</dbReference>
<dbReference type="PIRSF" id="PIRSF005485">
    <property type="entry name" value="HrcA"/>
    <property type="match status" value="1"/>
</dbReference>
<dbReference type="SUPFAM" id="SSF55781">
    <property type="entry name" value="GAF domain-like"/>
    <property type="match status" value="1"/>
</dbReference>
<dbReference type="SUPFAM" id="SSF46785">
    <property type="entry name" value="Winged helix' DNA-binding domain"/>
    <property type="match status" value="1"/>
</dbReference>
<comment type="function">
    <text evidence="1">Negative regulator of class I heat shock genes (grpE-dnaK-dnaJ and groELS operons). Prevents heat-shock induction of these operons.</text>
</comment>
<comment type="similarity">
    <text evidence="1">Belongs to the HrcA family.</text>
</comment>
<feature type="chain" id="PRO_1000010435" description="Heat-inducible transcription repressor HrcA">
    <location>
        <begin position="1"/>
        <end position="362"/>
    </location>
</feature>
<protein>
    <recommendedName>
        <fullName evidence="1">Heat-inducible transcription repressor HrcA</fullName>
    </recommendedName>
</protein>
<accession>Q1QRU4</accession>
<evidence type="ECO:0000255" key="1">
    <source>
        <dbReference type="HAMAP-Rule" id="MF_00081"/>
    </source>
</evidence>
<proteinExistence type="inferred from homology"/>
<organism>
    <name type="scientific">Nitrobacter hamburgensis (strain DSM 10229 / NCIMB 13809 / X14)</name>
    <dbReference type="NCBI Taxonomy" id="323097"/>
    <lineage>
        <taxon>Bacteria</taxon>
        <taxon>Pseudomonadati</taxon>
        <taxon>Pseudomonadota</taxon>
        <taxon>Alphaproteobacteria</taxon>
        <taxon>Hyphomicrobiales</taxon>
        <taxon>Nitrobacteraceae</taxon>
        <taxon>Nitrobacter</taxon>
    </lineage>
</organism>
<keyword id="KW-1185">Reference proteome</keyword>
<keyword id="KW-0678">Repressor</keyword>
<keyword id="KW-0346">Stress response</keyword>
<keyword id="KW-0804">Transcription</keyword>
<keyword id="KW-0805">Transcription regulation</keyword>